<organism>
    <name type="scientific">Prochlorococcus marinus (strain MIT 9313)</name>
    <dbReference type="NCBI Taxonomy" id="74547"/>
    <lineage>
        <taxon>Bacteria</taxon>
        <taxon>Bacillati</taxon>
        <taxon>Cyanobacteriota</taxon>
        <taxon>Cyanophyceae</taxon>
        <taxon>Synechococcales</taxon>
        <taxon>Prochlorococcaceae</taxon>
        <taxon>Prochlorococcus</taxon>
    </lineage>
</organism>
<comment type="function">
    <text evidence="1">Reversibly transfers an adenylyl group from ATP to 4'-phosphopantetheine, yielding dephospho-CoA (dPCoA) and pyrophosphate.</text>
</comment>
<comment type="catalytic activity">
    <reaction evidence="1">
        <text>(R)-4'-phosphopantetheine + ATP + H(+) = 3'-dephospho-CoA + diphosphate</text>
        <dbReference type="Rhea" id="RHEA:19801"/>
        <dbReference type="ChEBI" id="CHEBI:15378"/>
        <dbReference type="ChEBI" id="CHEBI:30616"/>
        <dbReference type="ChEBI" id="CHEBI:33019"/>
        <dbReference type="ChEBI" id="CHEBI:57328"/>
        <dbReference type="ChEBI" id="CHEBI:61723"/>
        <dbReference type="EC" id="2.7.7.3"/>
    </reaction>
</comment>
<comment type="cofactor">
    <cofactor evidence="1">
        <name>Mg(2+)</name>
        <dbReference type="ChEBI" id="CHEBI:18420"/>
    </cofactor>
</comment>
<comment type="pathway">
    <text evidence="1">Cofactor biosynthesis; coenzyme A biosynthesis; CoA from (R)-pantothenate: step 4/5.</text>
</comment>
<comment type="subunit">
    <text evidence="1">Homohexamer.</text>
</comment>
<comment type="subcellular location">
    <subcellularLocation>
        <location evidence="1">Cytoplasm</location>
    </subcellularLocation>
</comment>
<comment type="similarity">
    <text evidence="1">Belongs to the bacterial CoaD family.</text>
</comment>
<reference key="1">
    <citation type="journal article" date="2003" name="Nature">
        <title>Genome divergence in two Prochlorococcus ecotypes reflects oceanic niche differentiation.</title>
        <authorList>
            <person name="Rocap G."/>
            <person name="Larimer F.W."/>
            <person name="Lamerdin J.E."/>
            <person name="Malfatti S."/>
            <person name="Chain P."/>
            <person name="Ahlgren N.A."/>
            <person name="Arellano A."/>
            <person name="Coleman M."/>
            <person name="Hauser L."/>
            <person name="Hess W.R."/>
            <person name="Johnson Z.I."/>
            <person name="Land M.L."/>
            <person name="Lindell D."/>
            <person name="Post A.F."/>
            <person name="Regala W."/>
            <person name="Shah M."/>
            <person name="Shaw S.L."/>
            <person name="Steglich C."/>
            <person name="Sullivan M.B."/>
            <person name="Ting C.S."/>
            <person name="Tolonen A."/>
            <person name="Webb E.A."/>
            <person name="Zinser E.R."/>
            <person name="Chisholm S.W."/>
        </authorList>
    </citation>
    <scope>NUCLEOTIDE SEQUENCE [LARGE SCALE GENOMIC DNA]</scope>
    <source>
        <strain>MIT 9313</strain>
    </source>
</reference>
<proteinExistence type="inferred from homology"/>
<dbReference type="EC" id="2.7.7.3" evidence="1"/>
<dbReference type="EMBL" id="BX548175">
    <property type="protein sequence ID" value="CAE20897.1"/>
    <property type="molecule type" value="Genomic_DNA"/>
</dbReference>
<dbReference type="RefSeq" id="WP_011130100.1">
    <property type="nucleotide sequence ID" value="NC_005071.1"/>
</dbReference>
<dbReference type="SMR" id="Q7V7L9"/>
<dbReference type="KEGG" id="pmt:PMT_0722"/>
<dbReference type="eggNOG" id="COG0669">
    <property type="taxonomic scope" value="Bacteria"/>
</dbReference>
<dbReference type="HOGENOM" id="CLU_100149_1_1_3"/>
<dbReference type="OrthoDB" id="9806661at2"/>
<dbReference type="UniPathway" id="UPA00241">
    <property type="reaction ID" value="UER00355"/>
</dbReference>
<dbReference type="Proteomes" id="UP000001423">
    <property type="component" value="Chromosome"/>
</dbReference>
<dbReference type="GO" id="GO:0005737">
    <property type="term" value="C:cytoplasm"/>
    <property type="evidence" value="ECO:0007669"/>
    <property type="project" value="UniProtKB-SubCell"/>
</dbReference>
<dbReference type="GO" id="GO:0005524">
    <property type="term" value="F:ATP binding"/>
    <property type="evidence" value="ECO:0007669"/>
    <property type="project" value="UniProtKB-KW"/>
</dbReference>
<dbReference type="GO" id="GO:0004595">
    <property type="term" value="F:pantetheine-phosphate adenylyltransferase activity"/>
    <property type="evidence" value="ECO:0007669"/>
    <property type="project" value="UniProtKB-UniRule"/>
</dbReference>
<dbReference type="GO" id="GO:0015937">
    <property type="term" value="P:coenzyme A biosynthetic process"/>
    <property type="evidence" value="ECO:0007669"/>
    <property type="project" value="UniProtKB-UniRule"/>
</dbReference>
<dbReference type="CDD" id="cd02163">
    <property type="entry name" value="PPAT"/>
    <property type="match status" value="1"/>
</dbReference>
<dbReference type="Gene3D" id="3.40.50.620">
    <property type="entry name" value="HUPs"/>
    <property type="match status" value="1"/>
</dbReference>
<dbReference type="HAMAP" id="MF_00151">
    <property type="entry name" value="PPAT_bact"/>
    <property type="match status" value="1"/>
</dbReference>
<dbReference type="InterPro" id="IPR004821">
    <property type="entry name" value="Cyt_trans-like"/>
</dbReference>
<dbReference type="InterPro" id="IPR001980">
    <property type="entry name" value="PPAT"/>
</dbReference>
<dbReference type="InterPro" id="IPR014729">
    <property type="entry name" value="Rossmann-like_a/b/a_fold"/>
</dbReference>
<dbReference type="NCBIfam" id="TIGR01510">
    <property type="entry name" value="coaD_prev_kdtB"/>
    <property type="match status" value="1"/>
</dbReference>
<dbReference type="NCBIfam" id="TIGR00125">
    <property type="entry name" value="cyt_tran_rel"/>
    <property type="match status" value="1"/>
</dbReference>
<dbReference type="PANTHER" id="PTHR21342">
    <property type="entry name" value="PHOSPHOPANTETHEINE ADENYLYLTRANSFERASE"/>
    <property type="match status" value="1"/>
</dbReference>
<dbReference type="PANTHER" id="PTHR21342:SF1">
    <property type="entry name" value="PHOSPHOPANTETHEINE ADENYLYLTRANSFERASE"/>
    <property type="match status" value="1"/>
</dbReference>
<dbReference type="Pfam" id="PF01467">
    <property type="entry name" value="CTP_transf_like"/>
    <property type="match status" value="1"/>
</dbReference>
<dbReference type="PRINTS" id="PR01020">
    <property type="entry name" value="LPSBIOSNTHSS"/>
</dbReference>
<dbReference type="SUPFAM" id="SSF52374">
    <property type="entry name" value="Nucleotidylyl transferase"/>
    <property type="match status" value="1"/>
</dbReference>
<keyword id="KW-0067">ATP-binding</keyword>
<keyword id="KW-0173">Coenzyme A biosynthesis</keyword>
<keyword id="KW-0963">Cytoplasm</keyword>
<keyword id="KW-0460">Magnesium</keyword>
<keyword id="KW-0547">Nucleotide-binding</keyword>
<keyword id="KW-0548">Nucleotidyltransferase</keyword>
<keyword id="KW-1185">Reference proteome</keyword>
<keyword id="KW-0808">Transferase</keyword>
<feature type="chain" id="PRO_0000156256" description="Phosphopantetheine adenylyltransferase">
    <location>
        <begin position="1"/>
        <end position="157"/>
    </location>
</feature>
<feature type="binding site" evidence="1">
    <location>
        <begin position="8"/>
        <end position="9"/>
    </location>
    <ligand>
        <name>ATP</name>
        <dbReference type="ChEBI" id="CHEBI:30616"/>
    </ligand>
</feature>
<feature type="binding site" evidence="1">
    <location>
        <position position="8"/>
    </location>
    <ligand>
        <name>substrate</name>
    </ligand>
</feature>
<feature type="binding site" evidence="1">
    <location>
        <position position="16"/>
    </location>
    <ligand>
        <name>ATP</name>
        <dbReference type="ChEBI" id="CHEBI:30616"/>
    </ligand>
</feature>
<feature type="binding site" evidence="1">
    <location>
        <position position="40"/>
    </location>
    <ligand>
        <name>substrate</name>
    </ligand>
</feature>
<feature type="binding site" evidence="1">
    <location>
        <position position="72"/>
    </location>
    <ligand>
        <name>substrate</name>
    </ligand>
</feature>
<feature type="binding site" evidence="1">
    <location>
        <position position="86"/>
    </location>
    <ligand>
        <name>substrate</name>
    </ligand>
</feature>
<feature type="binding site" evidence="1">
    <location>
        <begin position="87"/>
        <end position="89"/>
    </location>
    <ligand>
        <name>ATP</name>
        <dbReference type="ChEBI" id="CHEBI:30616"/>
    </ligand>
</feature>
<feature type="binding site" evidence="1">
    <location>
        <position position="97"/>
    </location>
    <ligand>
        <name>ATP</name>
        <dbReference type="ChEBI" id="CHEBI:30616"/>
    </ligand>
</feature>
<feature type="binding site" evidence="1">
    <location>
        <begin position="122"/>
        <end position="128"/>
    </location>
    <ligand>
        <name>ATP</name>
        <dbReference type="ChEBI" id="CHEBI:30616"/>
    </ligand>
</feature>
<feature type="site" description="Transition state stabilizer" evidence="1">
    <location>
        <position position="16"/>
    </location>
</feature>
<sequence length="157" mass="17367">MRALYPGSFDPLTLGHLDLIERGCALFGEVVVAVLSNPAKTSTFTLQQRFNQIHVATAHCKGVSVICFEGLTVSCARHNQVDLILRGLRAMSDFEYELQIAHTNRSLAPDFETIFLATAAHHSFLSSSMVKEVARFGGNIDHMVPEVVAQDLHRLFN</sequence>
<gene>
    <name evidence="1" type="primary">coaD</name>
    <name type="ordered locus">PMT_0722</name>
</gene>
<protein>
    <recommendedName>
        <fullName evidence="1">Phosphopantetheine adenylyltransferase</fullName>
        <ecNumber evidence="1">2.7.7.3</ecNumber>
    </recommendedName>
    <alternativeName>
        <fullName evidence="1">Dephospho-CoA pyrophosphorylase</fullName>
    </alternativeName>
    <alternativeName>
        <fullName evidence="1">Pantetheine-phosphate adenylyltransferase</fullName>
        <shortName evidence="1">PPAT</shortName>
    </alternativeName>
</protein>
<evidence type="ECO:0000255" key="1">
    <source>
        <dbReference type="HAMAP-Rule" id="MF_00151"/>
    </source>
</evidence>
<name>COAD_PROMM</name>
<accession>Q7V7L9</accession>